<feature type="chain" id="PRO_0000134949" description="Cobalt-precorrin-6B C(15)-methyltransferase (decarboxylating)">
    <location>
        <begin position="1"/>
        <end position="192"/>
    </location>
</feature>
<feature type="binding site" evidence="1">
    <location>
        <position position="15"/>
    </location>
    <ligand>
        <name>S-adenosyl-L-methionine</name>
        <dbReference type="ChEBI" id="CHEBI:59789"/>
    </ligand>
</feature>
<feature type="binding site" evidence="1">
    <location>
        <begin position="39"/>
        <end position="43"/>
    </location>
    <ligand>
        <name>S-adenosyl-L-methionine</name>
        <dbReference type="ChEBI" id="CHEBI:59789"/>
    </ligand>
</feature>
<feature type="binding site" evidence="1">
    <location>
        <position position="62"/>
    </location>
    <ligand>
        <name>S-adenosyl-L-methionine</name>
        <dbReference type="ChEBI" id="CHEBI:59789"/>
    </ligand>
</feature>
<feature type="binding site" evidence="1">
    <location>
        <position position="90"/>
    </location>
    <ligand>
        <name>S-adenosyl-L-methionine</name>
        <dbReference type="ChEBI" id="CHEBI:59789"/>
    </ligand>
</feature>
<comment type="function">
    <text evidence="2">Catalyzes the methylation of C-15 in cobalt-precorrin-6B followed by the decarboxylation of C-12 to form cobalt-precorrin-7.</text>
</comment>
<comment type="catalytic activity">
    <reaction>
        <text>Co-precorrin-6B + S-adenosyl-L-methionine = Co-precorrin-7 + S-adenosyl-L-homocysteine + CO2</text>
        <dbReference type="Rhea" id="RHEA:36067"/>
        <dbReference type="ChEBI" id="CHEBI:16526"/>
        <dbReference type="ChEBI" id="CHEBI:57856"/>
        <dbReference type="ChEBI" id="CHEBI:59789"/>
        <dbReference type="ChEBI" id="CHEBI:70791"/>
        <dbReference type="ChEBI" id="CHEBI:72780"/>
        <dbReference type="EC" id="2.1.1.196"/>
    </reaction>
</comment>
<comment type="pathway">
    <text>Cofactor biosynthesis; adenosylcobalamin biosynthesis; cob(II)yrinate a,c-diamide from sirohydrochlorin (anaerobic route): step 8/10.</text>
</comment>
<comment type="similarity">
    <text evidence="3">Belongs to the methyltransferase superfamily. Bacterial-type CbiT family.</text>
</comment>
<comment type="caution">
    <text evidence="3">Was originally thought to be a precorrin-8w decarboxylase.</text>
</comment>
<protein>
    <recommendedName>
        <fullName>Cobalt-precorrin-6B C(15)-methyltransferase (decarboxylating)</fullName>
        <ecNumber>2.1.1.196</ecNumber>
    </recommendedName>
</protein>
<reference key="1">
    <citation type="journal article" date="1993" name="J. Bacteriol.">
        <title>Characterization of the cobalamin (vitamin B12) biosynthetic genes of Salmonella typhimurium.</title>
        <authorList>
            <person name="Roth J.R."/>
            <person name="Lawrence J.G."/>
            <person name="Rubenfield M."/>
            <person name="Kieffer-Higgins S."/>
            <person name="Church G.M."/>
        </authorList>
    </citation>
    <scope>NUCLEOTIDE SEQUENCE [GENOMIC DNA]</scope>
    <scope>PROTEIN SEQUENCE OF N-TERMINUS</scope>
    <source>
        <strain>LT2</strain>
    </source>
</reference>
<reference key="2">
    <citation type="journal article" date="2001" name="Nature">
        <title>Complete genome sequence of Salmonella enterica serovar Typhimurium LT2.</title>
        <authorList>
            <person name="McClelland M."/>
            <person name="Sanderson K.E."/>
            <person name="Spieth J."/>
            <person name="Clifton S.W."/>
            <person name="Latreille P."/>
            <person name="Courtney L."/>
            <person name="Porwollik S."/>
            <person name="Ali J."/>
            <person name="Dante M."/>
            <person name="Du F."/>
            <person name="Hou S."/>
            <person name="Layman D."/>
            <person name="Leonard S."/>
            <person name="Nguyen C."/>
            <person name="Scott K."/>
            <person name="Holmes A."/>
            <person name="Grewal N."/>
            <person name="Mulvaney E."/>
            <person name="Ryan E."/>
            <person name="Sun H."/>
            <person name="Florea L."/>
            <person name="Miller W."/>
            <person name="Stoneking T."/>
            <person name="Nhan M."/>
            <person name="Waterston R."/>
            <person name="Wilson R.K."/>
        </authorList>
    </citation>
    <scope>NUCLEOTIDE SEQUENCE [LARGE SCALE GENOMIC DNA]</scope>
    <source>
        <strain>LT2 / SGSC1412 / ATCC 700720</strain>
    </source>
</reference>
<reference key="3">
    <citation type="journal article" date="1992" name="FEBS Lett.">
        <title>Expression of 9 Salmonella typhimurium enzymes for cobinamide synthesis. Identification of the 11-methyl and 20-methyl transferases of corrin biosynthesis.</title>
        <authorList>
            <person name="Roessner C.A."/>
            <person name="Warren M.J."/>
            <person name="Santander P.J."/>
            <person name="Atshaves B.P."/>
            <person name="Ozaki S."/>
            <person name="Stolowich N.J."/>
            <person name="Iida K."/>
            <person name="Scott A.I."/>
        </authorList>
    </citation>
    <scope>PROTEIN SEQUENCE OF 1-10</scope>
</reference>
<reference key="4">
    <citation type="journal article" date="2006" name="Bioorg. Med. Chem.">
        <title>Structural characterization of novel cobalt corrinoids synthesized by enzymes of the vitamin B12 anaerobic pathway.</title>
        <authorList>
            <person name="Santander P.J."/>
            <person name="Kajiwara Y."/>
            <person name="Williams H.J."/>
            <person name="Scott A.I."/>
        </authorList>
    </citation>
    <scope>FUNCTION</scope>
</reference>
<accession>Q05632</accession>
<evidence type="ECO:0000250" key="1"/>
<evidence type="ECO:0000269" key="2">
    <source>
    </source>
</evidence>
<evidence type="ECO:0000305" key="3"/>
<keyword id="KW-0169">Cobalamin biosynthesis</keyword>
<keyword id="KW-0903">Direct protein sequencing</keyword>
<keyword id="KW-0489">Methyltransferase</keyword>
<keyword id="KW-1185">Reference proteome</keyword>
<keyword id="KW-0949">S-adenosyl-L-methionine</keyword>
<keyword id="KW-0808">Transferase</keyword>
<gene>
    <name type="primary">cbiT</name>
    <name type="ordered locus">STM2030</name>
</gene>
<sequence>MKDELFLRGENVPMTKEAVRALALSKLELHRASHLIDVGAGTGSVSIEAALQFPSLQVTAIERNPAALRLLDENRQRFACGNIDILPGEAPMTITGKADAVFMGGSGGHLTALIDWAMGHLHPGGRLVMTFILQENLHSALAHLAHIGACRMDCVQLQLSSLTPLGAGHYFKPNNPVFVIACQKEENHVRDI</sequence>
<proteinExistence type="evidence at protein level"/>
<organism>
    <name type="scientific">Salmonella typhimurium (strain LT2 / SGSC1412 / ATCC 700720)</name>
    <dbReference type="NCBI Taxonomy" id="99287"/>
    <lineage>
        <taxon>Bacteria</taxon>
        <taxon>Pseudomonadati</taxon>
        <taxon>Pseudomonadota</taxon>
        <taxon>Gammaproteobacteria</taxon>
        <taxon>Enterobacterales</taxon>
        <taxon>Enterobacteriaceae</taxon>
        <taxon>Salmonella</taxon>
    </lineage>
</organism>
<name>CBIT_SALTY</name>
<dbReference type="EC" id="2.1.1.196"/>
<dbReference type="EMBL" id="L12006">
    <property type="protein sequence ID" value="AAA27257.1"/>
    <property type="molecule type" value="Genomic_DNA"/>
</dbReference>
<dbReference type="EMBL" id="AE006468">
    <property type="protein sequence ID" value="AAL20934.1"/>
    <property type="molecule type" value="Genomic_DNA"/>
</dbReference>
<dbReference type="RefSeq" id="NP_460975.1">
    <property type="nucleotide sequence ID" value="NC_003197.2"/>
</dbReference>
<dbReference type="RefSeq" id="WP_000650985.1">
    <property type="nucleotide sequence ID" value="NC_003197.2"/>
</dbReference>
<dbReference type="SMR" id="Q05632"/>
<dbReference type="STRING" id="99287.STM2030"/>
<dbReference type="PaxDb" id="99287-STM2030"/>
<dbReference type="GeneID" id="1253551"/>
<dbReference type="KEGG" id="stm:STM2030"/>
<dbReference type="PATRIC" id="fig|99287.12.peg.2152"/>
<dbReference type="HOGENOM" id="CLU_094143_0_0_6"/>
<dbReference type="OMA" id="RCKFVYA"/>
<dbReference type="PhylomeDB" id="Q05632"/>
<dbReference type="BioCyc" id="MetaCyc:MONOMER-13226"/>
<dbReference type="BioCyc" id="SENT99287:STM2030-MONOMER"/>
<dbReference type="UniPathway" id="UPA00148">
    <property type="reaction ID" value="UER00229"/>
</dbReference>
<dbReference type="Proteomes" id="UP000001014">
    <property type="component" value="Chromosome"/>
</dbReference>
<dbReference type="GO" id="GO:0043776">
    <property type="term" value="F:cobalt-precorrin-6B C5-methyltransferase activity"/>
    <property type="evidence" value="ECO:0007669"/>
    <property type="project" value="RHEA"/>
</dbReference>
<dbReference type="GO" id="GO:0008276">
    <property type="term" value="F:protein methyltransferase activity"/>
    <property type="evidence" value="ECO:0007669"/>
    <property type="project" value="InterPro"/>
</dbReference>
<dbReference type="GO" id="GO:0009236">
    <property type="term" value="P:cobalamin biosynthetic process"/>
    <property type="evidence" value="ECO:0007669"/>
    <property type="project" value="UniProtKB-UniPathway"/>
</dbReference>
<dbReference type="GO" id="GO:0032259">
    <property type="term" value="P:methylation"/>
    <property type="evidence" value="ECO:0007669"/>
    <property type="project" value="UniProtKB-KW"/>
</dbReference>
<dbReference type="CDD" id="cd02440">
    <property type="entry name" value="AdoMet_MTases"/>
    <property type="match status" value="1"/>
</dbReference>
<dbReference type="Gene3D" id="3.40.50.150">
    <property type="entry name" value="Vaccinia Virus protein VP39"/>
    <property type="match status" value="1"/>
</dbReference>
<dbReference type="InterPro" id="IPR014008">
    <property type="entry name" value="Cbl_synth_MTase_CbiT"/>
</dbReference>
<dbReference type="InterPro" id="IPR050714">
    <property type="entry name" value="Cobalamin_biosynth_MTase"/>
</dbReference>
<dbReference type="InterPro" id="IPR029063">
    <property type="entry name" value="SAM-dependent_MTases_sf"/>
</dbReference>
<dbReference type="InterPro" id="IPR007848">
    <property type="entry name" value="Small_mtfrase_dom"/>
</dbReference>
<dbReference type="NCBIfam" id="TIGR02469">
    <property type="entry name" value="CbiT"/>
    <property type="match status" value="1"/>
</dbReference>
<dbReference type="NCBIfam" id="NF006138">
    <property type="entry name" value="PRK08287.1"/>
    <property type="match status" value="1"/>
</dbReference>
<dbReference type="PANTHER" id="PTHR43182">
    <property type="entry name" value="COBALT-PRECORRIN-6B C(15)-METHYLTRANSFERASE (DECARBOXYLATING)"/>
    <property type="match status" value="1"/>
</dbReference>
<dbReference type="PANTHER" id="PTHR43182:SF1">
    <property type="entry name" value="COBALT-PRECORRIN-7 C(5)-METHYLTRANSFERASE"/>
    <property type="match status" value="1"/>
</dbReference>
<dbReference type="Pfam" id="PF05175">
    <property type="entry name" value="MTS"/>
    <property type="match status" value="1"/>
</dbReference>
<dbReference type="SUPFAM" id="SSF53335">
    <property type="entry name" value="S-adenosyl-L-methionine-dependent methyltransferases"/>
    <property type="match status" value="1"/>
</dbReference>